<comment type="function">
    <text evidence="4">Forms water-filled channels that favor the permeation of cations.</text>
</comment>
<comment type="subcellular location">
    <subcellularLocation>
        <location evidence="1">Secreted</location>
        <location evidence="1">Cell wall</location>
    </subcellularLocation>
    <text evidence="1 7">Probably part of the corynemycolate layer which forms a structure similar to the outer membrane found in Gram-negative bacteria.</text>
</comment>
<comment type="similarity">
    <text evidence="6">Belongs to the PorA family.</text>
</comment>
<dbReference type="EMBL" id="CP002857">
    <property type="protein sequence ID" value="AEI08929.1"/>
    <property type="molecule type" value="Genomic_DNA"/>
</dbReference>
<dbReference type="RefSeq" id="WP_013887954.1">
    <property type="nucleotide sequence ID" value="NC_015673.1"/>
</dbReference>
<dbReference type="SMR" id="F8DYT7"/>
<dbReference type="STRING" id="662755.CRES_0567"/>
<dbReference type="KEGG" id="crd:CRES_0567"/>
<dbReference type="eggNOG" id="ENOG5031U1J">
    <property type="taxonomic scope" value="Bacteria"/>
</dbReference>
<dbReference type="HOGENOM" id="CLU_045231_1_0_11"/>
<dbReference type="OrthoDB" id="153031at2"/>
<dbReference type="Proteomes" id="UP000000492">
    <property type="component" value="Chromosome"/>
</dbReference>
<dbReference type="GO" id="GO:0005576">
    <property type="term" value="C:extracellular region"/>
    <property type="evidence" value="ECO:0007669"/>
    <property type="project" value="UniProtKB-KW"/>
</dbReference>
<dbReference type="GO" id="GO:0006811">
    <property type="term" value="P:monoatomic ion transport"/>
    <property type="evidence" value="ECO:0007669"/>
    <property type="project" value="UniProtKB-KW"/>
</dbReference>
<dbReference type="InterPro" id="IPR021424">
    <property type="entry name" value="PorA"/>
</dbReference>
<dbReference type="Pfam" id="PF11271">
    <property type="entry name" value="PorA"/>
    <property type="match status" value="1"/>
</dbReference>
<keyword id="KW-0134">Cell wall</keyword>
<keyword id="KW-0406">Ion transport</keyword>
<keyword id="KW-1185">Reference proteome</keyword>
<keyword id="KW-0964">Secreted</keyword>
<keyword id="KW-0732">Signal</keyword>
<keyword id="KW-0813">Transport</keyword>
<accession>F8DYT7</accession>
<gene>
    <name evidence="5" type="primary">porA</name>
    <name type="ordered locus">CRES_0567</name>
</gene>
<name>PORA_CORRG</name>
<evidence type="ECO:0000250" key="1">
    <source>
        <dbReference type="UniProtKB" id="C0HJE6"/>
    </source>
</evidence>
<evidence type="ECO:0000255" key="2"/>
<evidence type="ECO:0000256" key="3">
    <source>
        <dbReference type="SAM" id="MobiDB-lite"/>
    </source>
</evidence>
<evidence type="ECO:0000269" key="4">
    <source>
    </source>
</evidence>
<evidence type="ECO:0000303" key="5">
    <source>
    </source>
</evidence>
<evidence type="ECO:0000305" key="6"/>
<evidence type="ECO:0000305" key="7">
    <source>
    </source>
</evidence>
<evidence type="ECO:0000312" key="8">
    <source>
        <dbReference type="EMBL" id="AEI08929.1"/>
    </source>
</evidence>
<protein>
    <recommendedName>
        <fullName evidence="5">Porin PorA</fullName>
    </recommendedName>
</protein>
<proteinExistence type="inferred from homology"/>
<organism>
    <name type="scientific">Corynebacterium resistens (strain DSM 45100 / JCM 12819 / GTC 2026 / SICGH 158)</name>
    <dbReference type="NCBI Taxonomy" id="662755"/>
    <lineage>
        <taxon>Bacteria</taxon>
        <taxon>Bacillati</taxon>
        <taxon>Actinomycetota</taxon>
        <taxon>Actinomycetes</taxon>
        <taxon>Mycobacteriales</taxon>
        <taxon>Corynebacteriaceae</taxon>
        <taxon>Corynebacterium</taxon>
    </lineage>
</organism>
<reference evidence="8" key="1">
    <citation type="journal article" date="2012" name="BMC Genomics">
        <title>Complete genome sequence, lifestyle, and multi-drug resistance of the human pathogen Corynebacterium resistens DSM 45100 isolated from blood samples of a leukemia patient.</title>
        <authorList>
            <person name="Schroder J."/>
            <person name="Maus I."/>
            <person name="Meyer K."/>
            <person name="Wordemann S."/>
            <person name="Blom J."/>
            <person name="Jaenicke S."/>
            <person name="Schneider J."/>
            <person name="Trost E."/>
            <person name="Tauch A."/>
        </authorList>
    </citation>
    <scope>NUCLEOTIDE SEQUENCE [LARGE SCALE GENOMIC DNA]</scope>
    <source>
        <strain>DSM 45100 / JCM 12819 / CCUG 50093 / GTC 2026 / SICGH 158</strain>
    </source>
</reference>
<reference evidence="6" key="2">
    <citation type="journal article" date="2013" name="Biochim. Biophys. Acta">
        <title>Identification and characterization of the channel-forming protein in the cell wall of Corynebacterium amycolatum.</title>
        <authorList>
            <person name="Soltan Mohammadi N."/>
            <person name="Mafakheri S."/>
            <person name="Abdali N."/>
            <person name="Barcena-Uribarri I."/>
            <person name="Tauch A."/>
            <person name="Benz R."/>
        </authorList>
    </citation>
    <scope>FUNCTION</scope>
    <source>
        <strain evidence="4">DSM 45100 / JCM 12819 / CCUG 50093 / GTC 2026 / SICGH 158</strain>
    </source>
</reference>
<feature type="signal peptide" evidence="2">
    <location>
        <begin position="1"/>
        <end position="22"/>
    </location>
</feature>
<feature type="chain" id="PRO_0000430485" description="Porin PorA" evidence="2">
    <location>
        <begin position="23"/>
        <end position="413"/>
    </location>
</feature>
<feature type="region of interest" description="Disordered" evidence="3">
    <location>
        <begin position="265"/>
        <end position="288"/>
    </location>
</feature>
<sequence length="413" mass="45983">MKKVVSSLLIILGAAMLIFAIALPTYVVPKGKVLPKDIVSTTGTDPIKGNLLDASALAEGKPVSGKENLPECRGKDKQVSCFIWKDLELQSQRFTRAQEPTDDKVVTLEAGQTLFRTDRQEPKNLVNATVDRVTLDRKTQMPVADPVSTLDVNAPALNPNGEAAIGPFTRPGIQYQFPMGTDRRSYDYFDTQALKAQPIDYVGEEEQDGEKVYKFEQTVSPVELYPRLKEQLEADGDLSKADQSTLASLRLKFPAKVWGIEGADTKSAADSKDDKKKDGDKKDEKSPEVELSRYYTVKRTLWVQPDTGVIVNGKEDIWQFYAKDQDEADKMAQPENREKEMNNPKRTALYIPGAWNDESRAAQMDKAKEGLKTLKTMGTTVPWILGPLGLLLLLVGLVMALKRRRAERHANAL</sequence>